<gene>
    <name type="primary">ppr8</name>
    <name type="ORF">SPBC1289.06c</name>
</gene>
<protein>
    <recommendedName>
        <fullName>Pentatricopeptide repeat-containing protein 8, mitochondrial</fullName>
    </recommendedName>
</protein>
<accession>O94615</accession>
<feature type="transit peptide" description="Mitochondrion" evidence="1">
    <location>
        <begin position="1"/>
        <end position="55"/>
    </location>
</feature>
<feature type="chain" id="PRO_0000303930" description="Pentatricopeptide repeat-containing protein 8, mitochondrial">
    <location>
        <begin position="56"/>
        <end position="481"/>
    </location>
</feature>
<feature type="repeat" description="PPR 1">
    <location>
        <begin position="137"/>
        <end position="172"/>
    </location>
</feature>
<feature type="repeat" description="PPR 2">
    <location>
        <begin position="365"/>
        <end position="399"/>
    </location>
</feature>
<comment type="function">
    <text evidence="3">Mitochondrial RNA-binding protein involved in mitochondrial translation. The cox1 mRNA is one target but it is not clear if ppr8 has a single or multiple targets.</text>
</comment>
<comment type="subcellular location">
    <subcellularLocation>
        <location evidence="2 3">Mitochondrion</location>
    </subcellularLocation>
</comment>
<comment type="disruption phenotype">
    <text evidence="3">Exhibits growth arrest on glycerol medium.</text>
</comment>
<dbReference type="EMBL" id="CU329671">
    <property type="protein sequence ID" value="CAB38686.1"/>
    <property type="molecule type" value="Genomic_DNA"/>
</dbReference>
<dbReference type="PIR" id="T39357">
    <property type="entry name" value="T39357"/>
</dbReference>
<dbReference type="RefSeq" id="NP_596830.1">
    <property type="nucleotide sequence ID" value="NM_001023851.2"/>
</dbReference>
<dbReference type="SMR" id="O94615"/>
<dbReference type="BioGRID" id="276161">
    <property type="interactions" value="68"/>
</dbReference>
<dbReference type="STRING" id="284812.O94615"/>
<dbReference type="iPTMnet" id="O94615"/>
<dbReference type="PaxDb" id="4896-SPBC1289.06c.1"/>
<dbReference type="EnsemblFungi" id="SPBC1289.06c.1">
    <property type="protein sequence ID" value="SPBC1289.06c.1:pep"/>
    <property type="gene ID" value="SPBC1289.06c"/>
</dbReference>
<dbReference type="GeneID" id="2539603"/>
<dbReference type="KEGG" id="spo:2539603"/>
<dbReference type="PomBase" id="SPBC1289.06c">
    <property type="gene designation" value="ppr8"/>
</dbReference>
<dbReference type="VEuPathDB" id="FungiDB:SPBC1289.06c"/>
<dbReference type="HOGENOM" id="CLU_567612_0_0_1"/>
<dbReference type="InParanoid" id="O94615"/>
<dbReference type="OMA" id="YHSEIIL"/>
<dbReference type="PRO" id="PR:O94615"/>
<dbReference type="Proteomes" id="UP000002485">
    <property type="component" value="Chromosome II"/>
</dbReference>
<dbReference type="GO" id="GO:0005759">
    <property type="term" value="C:mitochondrial matrix"/>
    <property type="evidence" value="ECO:0000305"/>
    <property type="project" value="PomBase"/>
</dbReference>
<dbReference type="GO" id="GO:0005739">
    <property type="term" value="C:mitochondrion"/>
    <property type="evidence" value="ECO:0000314"/>
    <property type="project" value="PomBase"/>
</dbReference>
<dbReference type="GO" id="GO:0140053">
    <property type="term" value="P:mitochondrial gene expression"/>
    <property type="evidence" value="ECO:0000255"/>
    <property type="project" value="PomBase"/>
</dbReference>
<dbReference type="GO" id="GO:0006417">
    <property type="term" value="P:regulation of translation"/>
    <property type="evidence" value="ECO:0007669"/>
    <property type="project" value="UniProtKB-KW"/>
</dbReference>
<dbReference type="GO" id="GO:0006412">
    <property type="term" value="P:translation"/>
    <property type="evidence" value="ECO:0007669"/>
    <property type="project" value="UniProtKB-KW"/>
</dbReference>
<dbReference type="Gene3D" id="1.25.40.10">
    <property type="entry name" value="Tetratricopeptide repeat domain"/>
    <property type="match status" value="1"/>
</dbReference>
<dbReference type="InterPro" id="IPR002885">
    <property type="entry name" value="Pentatricopeptide_rpt"/>
</dbReference>
<dbReference type="InterPro" id="IPR011990">
    <property type="entry name" value="TPR-like_helical_dom_sf"/>
</dbReference>
<dbReference type="Pfam" id="PF13812">
    <property type="entry name" value="PPR_3"/>
    <property type="match status" value="1"/>
</dbReference>
<reference key="1">
    <citation type="journal article" date="2002" name="Nature">
        <title>The genome sequence of Schizosaccharomyces pombe.</title>
        <authorList>
            <person name="Wood V."/>
            <person name="Gwilliam R."/>
            <person name="Rajandream M.A."/>
            <person name="Lyne M.H."/>
            <person name="Lyne R."/>
            <person name="Stewart A."/>
            <person name="Sgouros J.G."/>
            <person name="Peat N."/>
            <person name="Hayles J."/>
            <person name="Baker S.G."/>
            <person name="Basham D."/>
            <person name="Bowman S."/>
            <person name="Brooks K."/>
            <person name="Brown D."/>
            <person name="Brown S."/>
            <person name="Chillingworth T."/>
            <person name="Churcher C.M."/>
            <person name="Collins M."/>
            <person name="Connor R."/>
            <person name="Cronin A."/>
            <person name="Davis P."/>
            <person name="Feltwell T."/>
            <person name="Fraser A."/>
            <person name="Gentles S."/>
            <person name="Goble A."/>
            <person name="Hamlin N."/>
            <person name="Harris D.E."/>
            <person name="Hidalgo J."/>
            <person name="Hodgson G."/>
            <person name="Holroyd S."/>
            <person name="Hornsby T."/>
            <person name="Howarth S."/>
            <person name="Huckle E.J."/>
            <person name="Hunt S."/>
            <person name="Jagels K."/>
            <person name="James K.D."/>
            <person name="Jones L."/>
            <person name="Jones M."/>
            <person name="Leather S."/>
            <person name="McDonald S."/>
            <person name="McLean J."/>
            <person name="Mooney P."/>
            <person name="Moule S."/>
            <person name="Mungall K.L."/>
            <person name="Murphy L.D."/>
            <person name="Niblett D."/>
            <person name="Odell C."/>
            <person name="Oliver K."/>
            <person name="O'Neil S."/>
            <person name="Pearson D."/>
            <person name="Quail M.A."/>
            <person name="Rabbinowitsch E."/>
            <person name="Rutherford K.M."/>
            <person name="Rutter S."/>
            <person name="Saunders D."/>
            <person name="Seeger K."/>
            <person name="Sharp S."/>
            <person name="Skelton J."/>
            <person name="Simmonds M.N."/>
            <person name="Squares R."/>
            <person name="Squares S."/>
            <person name="Stevens K."/>
            <person name="Taylor K."/>
            <person name="Taylor R.G."/>
            <person name="Tivey A."/>
            <person name="Walsh S.V."/>
            <person name="Warren T."/>
            <person name="Whitehead S."/>
            <person name="Woodward J.R."/>
            <person name="Volckaert G."/>
            <person name="Aert R."/>
            <person name="Robben J."/>
            <person name="Grymonprez B."/>
            <person name="Weltjens I."/>
            <person name="Vanstreels E."/>
            <person name="Rieger M."/>
            <person name="Schaefer M."/>
            <person name="Mueller-Auer S."/>
            <person name="Gabel C."/>
            <person name="Fuchs M."/>
            <person name="Duesterhoeft A."/>
            <person name="Fritzc C."/>
            <person name="Holzer E."/>
            <person name="Moestl D."/>
            <person name="Hilbert H."/>
            <person name="Borzym K."/>
            <person name="Langer I."/>
            <person name="Beck A."/>
            <person name="Lehrach H."/>
            <person name="Reinhardt R."/>
            <person name="Pohl T.M."/>
            <person name="Eger P."/>
            <person name="Zimmermann W."/>
            <person name="Wedler H."/>
            <person name="Wambutt R."/>
            <person name="Purnelle B."/>
            <person name="Goffeau A."/>
            <person name="Cadieu E."/>
            <person name="Dreano S."/>
            <person name="Gloux S."/>
            <person name="Lelaure V."/>
            <person name="Mottier S."/>
            <person name="Galibert F."/>
            <person name="Aves S.J."/>
            <person name="Xiang Z."/>
            <person name="Hunt C."/>
            <person name="Moore K."/>
            <person name="Hurst S.M."/>
            <person name="Lucas M."/>
            <person name="Rochet M."/>
            <person name="Gaillardin C."/>
            <person name="Tallada V.A."/>
            <person name="Garzon A."/>
            <person name="Thode G."/>
            <person name="Daga R.R."/>
            <person name="Cruzado L."/>
            <person name="Jimenez J."/>
            <person name="Sanchez M."/>
            <person name="del Rey F."/>
            <person name="Benito J."/>
            <person name="Dominguez A."/>
            <person name="Revuelta J.L."/>
            <person name="Moreno S."/>
            <person name="Armstrong J."/>
            <person name="Forsburg S.L."/>
            <person name="Cerutti L."/>
            <person name="Lowe T."/>
            <person name="McCombie W.R."/>
            <person name="Paulsen I."/>
            <person name="Potashkin J."/>
            <person name="Shpakovski G.V."/>
            <person name="Ussery D."/>
            <person name="Barrell B.G."/>
            <person name="Nurse P."/>
        </authorList>
    </citation>
    <scope>NUCLEOTIDE SEQUENCE [LARGE SCALE GENOMIC DNA]</scope>
    <source>
        <strain>972 / ATCC 24843</strain>
    </source>
</reference>
<reference key="2">
    <citation type="journal article" date="2006" name="Nat. Biotechnol.">
        <title>ORFeome cloning and global analysis of protein localization in the fission yeast Schizosaccharomyces pombe.</title>
        <authorList>
            <person name="Matsuyama A."/>
            <person name="Arai R."/>
            <person name="Yashiroda Y."/>
            <person name="Shirai A."/>
            <person name="Kamata A."/>
            <person name="Sekido S."/>
            <person name="Kobayashi Y."/>
            <person name="Hashimoto A."/>
            <person name="Hamamoto M."/>
            <person name="Hiraoka Y."/>
            <person name="Horinouchi S."/>
            <person name="Yoshida M."/>
        </authorList>
    </citation>
    <scope>SUBCELLULAR LOCATION [LARGE SCALE ANALYSIS]</scope>
</reference>
<reference key="3">
    <citation type="journal article" date="2011" name="Nucleic Acids Res.">
        <title>A genome wide study in fission yeast reveals nine PPR proteins that regulate mitochondrial gene expression.</title>
        <authorList>
            <person name="Kuhl I."/>
            <person name="Dujeancourt L."/>
            <person name="Gaisne M."/>
            <person name="Herbert C.J."/>
            <person name="Bonnefoy N."/>
        </authorList>
    </citation>
    <scope>DOMAIN</scope>
    <scope>SUBCELLULAR LOCATION</scope>
    <scope>DISRUPTION PHENOTYPE</scope>
    <scope>FUNCTION</scope>
</reference>
<organism>
    <name type="scientific">Schizosaccharomyces pombe (strain 972 / ATCC 24843)</name>
    <name type="common">Fission yeast</name>
    <dbReference type="NCBI Taxonomy" id="284812"/>
    <lineage>
        <taxon>Eukaryota</taxon>
        <taxon>Fungi</taxon>
        <taxon>Dikarya</taxon>
        <taxon>Ascomycota</taxon>
        <taxon>Taphrinomycotina</taxon>
        <taxon>Schizosaccharomycetes</taxon>
        <taxon>Schizosaccharomycetales</taxon>
        <taxon>Schizosaccharomycetaceae</taxon>
        <taxon>Schizosaccharomyces</taxon>
    </lineage>
</organism>
<proteinExistence type="predicted"/>
<sequence>MQGFGSQIFRKLLRSSNAKVSDALLQNTRTLFTAPPLHSGLQTSFTAETQQHVRQNSQNLLKQLNDEMKARKYTETVATFSSLKPFGILDSQTINRYILFLVDRIKMLNGRGNVDEATLDKLDDILRYAIEHQEIASARFWRIMLQSYIDLNLFDKASLIADMSLSHMEFLPKDERVLGNLYISALQAKILGGASFEQCGKIGSAIHEQLEGKEVVNELVAVYLIYTVFKDQGISSKAHKALVQFNGLTSFHSDVIISVFVNKGLVDQAAAYLKNSNLNERNLPTIYTTVWLLQRLFEAHHSLDPLLTIFDYYLSVSPKDITRLTNAILSLSMKQFERDRDIKKATDFITTFINKMSDVKEFKPSISTANTLFSIASRLKDVKWLSAGFDMIDKYGLKPTHVTYRSLLKAYCLLPSTCEQISQAWVNLEYRLEAISISVADKEINLLKDCILSQPDRDDQQSCLQFLNMVLSKYGKHIRSP</sequence>
<evidence type="ECO:0000255" key="1"/>
<evidence type="ECO:0000269" key="2">
    <source>
    </source>
</evidence>
<evidence type="ECO:0000269" key="3">
    <source>
    </source>
</evidence>
<name>PPR8_SCHPO</name>
<keyword id="KW-0010">Activator</keyword>
<keyword id="KW-0496">Mitochondrion</keyword>
<keyword id="KW-0648">Protein biosynthesis</keyword>
<keyword id="KW-1185">Reference proteome</keyword>
<keyword id="KW-0677">Repeat</keyword>
<keyword id="KW-0809">Transit peptide</keyword>
<keyword id="KW-0810">Translation regulation</keyword>